<protein>
    <recommendedName>
        <fullName evidence="1">ATP synthase subunit alpha</fullName>
        <ecNumber evidence="1">7.1.2.2</ecNumber>
    </recommendedName>
    <alternativeName>
        <fullName evidence="1">ATP synthase F1 sector subunit alpha</fullName>
    </alternativeName>
    <alternativeName>
        <fullName evidence="1">F-ATPase subunit alpha</fullName>
    </alternativeName>
</protein>
<keyword id="KW-0066">ATP synthesis</keyword>
<keyword id="KW-0067">ATP-binding</keyword>
<keyword id="KW-1003">Cell membrane</keyword>
<keyword id="KW-0139">CF(1)</keyword>
<keyword id="KW-0375">Hydrogen ion transport</keyword>
<keyword id="KW-0406">Ion transport</keyword>
<keyword id="KW-0472">Membrane</keyword>
<keyword id="KW-0547">Nucleotide-binding</keyword>
<keyword id="KW-1278">Translocase</keyword>
<keyword id="KW-0813">Transport</keyword>
<name>ATPA_BACVZ</name>
<evidence type="ECO:0000255" key="1">
    <source>
        <dbReference type="HAMAP-Rule" id="MF_01346"/>
    </source>
</evidence>
<dbReference type="EC" id="7.1.2.2" evidence="1"/>
<dbReference type="EMBL" id="CP000560">
    <property type="protein sequence ID" value="ABS75728.1"/>
    <property type="molecule type" value="Genomic_DNA"/>
</dbReference>
<dbReference type="RefSeq" id="WP_003151170.1">
    <property type="nucleotide sequence ID" value="NC_009725.2"/>
</dbReference>
<dbReference type="SMR" id="A7Z9Q2"/>
<dbReference type="GeneID" id="93082543"/>
<dbReference type="KEGG" id="bay:RBAM_033990"/>
<dbReference type="HOGENOM" id="CLU_010091_2_1_9"/>
<dbReference type="Proteomes" id="UP000001120">
    <property type="component" value="Chromosome"/>
</dbReference>
<dbReference type="GO" id="GO:0005886">
    <property type="term" value="C:plasma membrane"/>
    <property type="evidence" value="ECO:0007669"/>
    <property type="project" value="UniProtKB-SubCell"/>
</dbReference>
<dbReference type="GO" id="GO:0045259">
    <property type="term" value="C:proton-transporting ATP synthase complex"/>
    <property type="evidence" value="ECO:0007669"/>
    <property type="project" value="UniProtKB-KW"/>
</dbReference>
<dbReference type="GO" id="GO:0043531">
    <property type="term" value="F:ADP binding"/>
    <property type="evidence" value="ECO:0007669"/>
    <property type="project" value="TreeGrafter"/>
</dbReference>
<dbReference type="GO" id="GO:0005524">
    <property type="term" value="F:ATP binding"/>
    <property type="evidence" value="ECO:0007669"/>
    <property type="project" value="UniProtKB-UniRule"/>
</dbReference>
<dbReference type="GO" id="GO:0046933">
    <property type="term" value="F:proton-transporting ATP synthase activity, rotational mechanism"/>
    <property type="evidence" value="ECO:0007669"/>
    <property type="project" value="UniProtKB-UniRule"/>
</dbReference>
<dbReference type="CDD" id="cd18113">
    <property type="entry name" value="ATP-synt_F1_alpha_C"/>
    <property type="match status" value="1"/>
</dbReference>
<dbReference type="CDD" id="cd18116">
    <property type="entry name" value="ATP-synt_F1_alpha_N"/>
    <property type="match status" value="1"/>
</dbReference>
<dbReference type="CDD" id="cd01132">
    <property type="entry name" value="F1-ATPase_alpha_CD"/>
    <property type="match status" value="1"/>
</dbReference>
<dbReference type="FunFam" id="1.20.150.20:FF:000001">
    <property type="entry name" value="ATP synthase subunit alpha"/>
    <property type="match status" value="1"/>
</dbReference>
<dbReference type="FunFam" id="2.40.30.20:FF:000001">
    <property type="entry name" value="ATP synthase subunit alpha"/>
    <property type="match status" value="1"/>
</dbReference>
<dbReference type="FunFam" id="3.40.50.300:FF:000002">
    <property type="entry name" value="ATP synthase subunit alpha"/>
    <property type="match status" value="1"/>
</dbReference>
<dbReference type="Gene3D" id="2.40.30.20">
    <property type="match status" value="1"/>
</dbReference>
<dbReference type="Gene3D" id="1.20.150.20">
    <property type="entry name" value="ATP synthase alpha/beta chain, C-terminal domain"/>
    <property type="match status" value="1"/>
</dbReference>
<dbReference type="Gene3D" id="3.40.50.300">
    <property type="entry name" value="P-loop containing nucleotide triphosphate hydrolases"/>
    <property type="match status" value="1"/>
</dbReference>
<dbReference type="HAMAP" id="MF_01346">
    <property type="entry name" value="ATP_synth_alpha_bact"/>
    <property type="match status" value="1"/>
</dbReference>
<dbReference type="InterPro" id="IPR023366">
    <property type="entry name" value="ATP_synth_asu-like_sf"/>
</dbReference>
<dbReference type="InterPro" id="IPR000793">
    <property type="entry name" value="ATP_synth_asu_C"/>
</dbReference>
<dbReference type="InterPro" id="IPR038376">
    <property type="entry name" value="ATP_synth_asu_C_sf"/>
</dbReference>
<dbReference type="InterPro" id="IPR033732">
    <property type="entry name" value="ATP_synth_F1_a_nt-bd_dom"/>
</dbReference>
<dbReference type="InterPro" id="IPR005294">
    <property type="entry name" value="ATP_synth_F1_asu"/>
</dbReference>
<dbReference type="InterPro" id="IPR020003">
    <property type="entry name" value="ATPase_a/bsu_AS"/>
</dbReference>
<dbReference type="InterPro" id="IPR004100">
    <property type="entry name" value="ATPase_F1/V1/A1_a/bsu_N"/>
</dbReference>
<dbReference type="InterPro" id="IPR036121">
    <property type="entry name" value="ATPase_F1/V1/A1_a/bsu_N_sf"/>
</dbReference>
<dbReference type="InterPro" id="IPR000194">
    <property type="entry name" value="ATPase_F1/V1/A1_a/bsu_nucl-bd"/>
</dbReference>
<dbReference type="InterPro" id="IPR027417">
    <property type="entry name" value="P-loop_NTPase"/>
</dbReference>
<dbReference type="NCBIfam" id="TIGR00962">
    <property type="entry name" value="atpA"/>
    <property type="match status" value="1"/>
</dbReference>
<dbReference type="NCBIfam" id="NF009884">
    <property type="entry name" value="PRK13343.1"/>
    <property type="match status" value="1"/>
</dbReference>
<dbReference type="PANTHER" id="PTHR48082">
    <property type="entry name" value="ATP SYNTHASE SUBUNIT ALPHA, MITOCHONDRIAL"/>
    <property type="match status" value="1"/>
</dbReference>
<dbReference type="PANTHER" id="PTHR48082:SF2">
    <property type="entry name" value="ATP SYNTHASE SUBUNIT ALPHA, MITOCHONDRIAL"/>
    <property type="match status" value="1"/>
</dbReference>
<dbReference type="Pfam" id="PF00006">
    <property type="entry name" value="ATP-synt_ab"/>
    <property type="match status" value="1"/>
</dbReference>
<dbReference type="Pfam" id="PF00306">
    <property type="entry name" value="ATP-synt_ab_C"/>
    <property type="match status" value="1"/>
</dbReference>
<dbReference type="Pfam" id="PF02874">
    <property type="entry name" value="ATP-synt_ab_N"/>
    <property type="match status" value="1"/>
</dbReference>
<dbReference type="PIRSF" id="PIRSF039088">
    <property type="entry name" value="F_ATPase_subunit_alpha"/>
    <property type="match status" value="1"/>
</dbReference>
<dbReference type="SUPFAM" id="SSF47917">
    <property type="entry name" value="C-terminal domain of alpha and beta subunits of F1 ATP synthase"/>
    <property type="match status" value="1"/>
</dbReference>
<dbReference type="SUPFAM" id="SSF50615">
    <property type="entry name" value="N-terminal domain of alpha and beta subunits of F1 ATP synthase"/>
    <property type="match status" value="1"/>
</dbReference>
<dbReference type="SUPFAM" id="SSF52540">
    <property type="entry name" value="P-loop containing nucleoside triphosphate hydrolases"/>
    <property type="match status" value="1"/>
</dbReference>
<dbReference type="PROSITE" id="PS00152">
    <property type="entry name" value="ATPASE_ALPHA_BETA"/>
    <property type="match status" value="1"/>
</dbReference>
<reference key="1">
    <citation type="journal article" date="2007" name="Nat. Biotechnol.">
        <title>Comparative analysis of the complete genome sequence of the plant growth-promoting bacterium Bacillus amyloliquefaciens FZB42.</title>
        <authorList>
            <person name="Chen X.H."/>
            <person name="Koumoutsi A."/>
            <person name="Scholz R."/>
            <person name="Eisenreich A."/>
            <person name="Schneider K."/>
            <person name="Heinemeyer I."/>
            <person name="Morgenstern B."/>
            <person name="Voss B."/>
            <person name="Hess W.R."/>
            <person name="Reva O."/>
            <person name="Junge H."/>
            <person name="Voigt B."/>
            <person name="Jungblut P.R."/>
            <person name="Vater J."/>
            <person name="Suessmuth R."/>
            <person name="Liesegang H."/>
            <person name="Strittmatter A."/>
            <person name="Gottschalk G."/>
            <person name="Borriss R."/>
        </authorList>
    </citation>
    <scope>NUCLEOTIDE SEQUENCE [LARGE SCALE GENOMIC DNA]</scope>
    <source>
        <strain>DSM 23117 / BGSC 10A6 / LMG 26770 / FZB42</strain>
    </source>
</reference>
<organism>
    <name type="scientific">Bacillus velezensis (strain DSM 23117 / BGSC 10A6 / LMG 26770 / FZB42)</name>
    <name type="common">Bacillus amyloliquefaciens subsp. plantarum</name>
    <dbReference type="NCBI Taxonomy" id="326423"/>
    <lineage>
        <taxon>Bacteria</taxon>
        <taxon>Bacillati</taxon>
        <taxon>Bacillota</taxon>
        <taxon>Bacilli</taxon>
        <taxon>Bacillales</taxon>
        <taxon>Bacillaceae</taxon>
        <taxon>Bacillus</taxon>
        <taxon>Bacillus amyloliquefaciens group</taxon>
    </lineage>
</organism>
<sequence length="502" mass="54724">MSIKAEEISTLIKQQIQNYQSEIEVHDVGTVIQVGDGIARVHGLDNCMAGELVEFSNGVLGMAQNLEESNVGIVILGPYRDIREGDEVKRTGRIMEVPVGEELIGRIVNPLGQPVDGLGPILTSKTRPIESQAPGVMDRKSVHEPLQTGIKAIDALIPIGRGQRELIIGDRQTGKTSVAIDTILNQKDQDMICVYVAIGQKESTVRGVVETLRKHGALDYTIVVTASASQPAPLLYLAPYAGVTMGEEFMYNGKHVLVVYDDLSKQAAAYRELSLLLRRPPGREAFPGDVFYLHSRLLERAAKLSDAKGAGSITALPFVETQAGDISAYIPTNVISITDGQIFLQSDLFFSGVRPAINAGLSVSRVGGSAQIKAMKKVAGTLRLDLASYRELEAFAQFGSDLDQATQAKLNRGARTVEVLKQDLNKPLPVEKQVAILYALTKGYLDDIPVADIRRFEEEYYMYLDQNHKDLLDGIAKTGNLPADEDFKAAIEGFKRTFAPSN</sequence>
<gene>
    <name evidence="1" type="primary">atpA</name>
    <name type="ordered locus">RBAM_033990</name>
</gene>
<feature type="chain" id="PRO_1000055052" description="ATP synthase subunit alpha">
    <location>
        <begin position="1"/>
        <end position="502"/>
    </location>
</feature>
<feature type="binding site" evidence="1">
    <location>
        <begin position="169"/>
        <end position="176"/>
    </location>
    <ligand>
        <name>ATP</name>
        <dbReference type="ChEBI" id="CHEBI:30616"/>
    </ligand>
</feature>
<feature type="site" description="Required for activity" evidence="1">
    <location>
        <position position="362"/>
    </location>
</feature>
<proteinExistence type="inferred from homology"/>
<comment type="function">
    <text evidence="1">Produces ATP from ADP in the presence of a proton gradient across the membrane. The alpha chain is a regulatory subunit.</text>
</comment>
<comment type="catalytic activity">
    <reaction evidence="1">
        <text>ATP + H2O + 4 H(+)(in) = ADP + phosphate + 5 H(+)(out)</text>
        <dbReference type="Rhea" id="RHEA:57720"/>
        <dbReference type="ChEBI" id="CHEBI:15377"/>
        <dbReference type="ChEBI" id="CHEBI:15378"/>
        <dbReference type="ChEBI" id="CHEBI:30616"/>
        <dbReference type="ChEBI" id="CHEBI:43474"/>
        <dbReference type="ChEBI" id="CHEBI:456216"/>
        <dbReference type="EC" id="7.1.2.2"/>
    </reaction>
</comment>
<comment type="subunit">
    <text evidence="1">F-type ATPases have 2 components, CF(1) - the catalytic core - and CF(0) - the membrane proton channel. CF(1) has five subunits: alpha(3), beta(3), gamma(1), delta(1), epsilon(1). CF(0) has three main subunits: a(1), b(2) and c(9-12). The alpha and beta chains form an alternating ring which encloses part of the gamma chain. CF(1) is attached to CF(0) by a central stalk formed by the gamma and epsilon chains, while a peripheral stalk is formed by the delta and b chains.</text>
</comment>
<comment type="subcellular location">
    <subcellularLocation>
        <location evidence="1">Cell membrane</location>
        <topology evidence="1">Peripheral membrane protein</topology>
    </subcellularLocation>
</comment>
<comment type="similarity">
    <text evidence="1">Belongs to the ATPase alpha/beta chains family.</text>
</comment>
<accession>A7Z9Q2</accession>